<proteinExistence type="evidence at protein level"/>
<organism>
    <name type="scientific">Cryptococcus neoformans var. grubii serotype A (strain H99 / ATCC 208821 / CBS 10515 / FGSC 9487)</name>
    <name type="common">Filobasidiella neoformans var. grubii</name>
    <dbReference type="NCBI Taxonomy" id="235443"/>
    <lineage>
        <taxon>Eukaryota</taxon>
        <taxon>Fungi</taxon>
        <taxon>Dikarya</taxon>
        <taxon>Basidiomycota</taxon>
        <taxon>Agaricomycotina</taxon>
        <taxon>Tremellomycetes</taxon>
        <taxon>Tremellales</taxon>
        <taxon>Cryptococcaceae</taxon>
        <taxon>Cryptococcus</taxon>
        <taxon>Cryptococcus neoformans species complex</taxon>
    </lineage>
</organism>
<gene>
    <name type="primary">FRR1</name>
    <name type="ORF">CNAG_03682</name>
</gene>
<accession>O94746</accession>
<accession>J9VFP5</accession>
<dbReference type="EC" id="5.2.1.8"/>
<dbReference type="EMBL" id="AF097889">
    <property type="protein sequence ID" value="AAD16172.1"/>
    <property type="molecule type" value="mRNA"/>
</dbReference>
<dbReference type="EMBL" id="AF097888">
    <property type="protein sequence ID" value="AAD16171.1"/>
    <property type="molecule type" value="Genomic_DNA"/>
</dbReference>
<dbReference type="EMBL" id="CP003821">
    <property type="protein sequence ID" value="AFR93187.1"/>
    <property type="status" value="ALT_INIT"/>
    <property type="molecule type" value="Genomic_DNA"/>
</dbReference>
<dbReference type="RefSeq" id="XP_012047386.1">
    <property type="nucleotide sequence ID" value="XM_012191996.1"/>
</dbReference>
<dbReference type="PDB" id="6TZ8">
    <property type="method" value="X-ray"/>
    <property type="resolution" value="3.30 A"/>
    <property type="chains" value="C/F=2-108"/>
</dbReference>
<dbReference type="PDBsum" id="6TZ8"/>
<dbReference type="SMR" id="O94746"/>
<dbReference type="SwissPalm" id="O94746"/>
<dbReference type="GeneID" id="23887158"/>
<dbReference type="KEGG" id="cng:CNAG_03682"/>
<dbReference type="HOGENOM" id="CLU_013615_12_1_1"/>
<dbReference type="OrthoDB" id="389at5206"/>
<dbReference type="Proteomes" id="UP000010091">
    <property type="component" value="Chromosome 2"/>
</dbReference>
<dbReference type="GO" id="GO:0005737">
    <property type="term" value="C:cytoplasm"/>
    <property type="evidence" value="ECO:0007669"/>
    <property type="project" value="UniProtKB-SubCell"/>
</dbReference>
<dbReference type="GO" id="GO:0003755">
    <property type="term" value="F:peptidyl-prolyl cis-trans isomerase activity"/>
    <property type="evidence" value="ECO:0007669"/>
    <property type="project" value="UniProtKB-KW"/>
</dbReference>
<dbReference type="FunFam" id="3.10.50.40:FF:000025">
    <property type="entry name" value="Peptidylprolyl isomerase"/>
    <property type="match status" value="1"/>
</dbReference>
<dbReference type="Gene3D" id="3.10.50.40">
    <property type="match status" value="1"/>
</dbReference>
<dbReference type="InterPro" id="IPR050689">
    <property type="entry name" value="FKBP-type_PPIase"/>
</dbReference>
<dbReference type="InterPro" id="IPR046357">
    <property type="entry name" value="PPIase_dom_sf"/>
</dbReference>
<dbReference type="InterPro" id="IPR001179">
    <property type="entry name" value="PPIase_FKBP_dom"/>
</dbReference>
<dbReference type="PANTHER" id="PTHR10516:SF443">
    <property type="entry name" value="FK506-BINDING PROTEIN 59-RELATED"/>
    <property type="match status" value="1"/>
</dbReference>
<dbReference type="PANTHER" id="PTHR10516">
    <property type="entry name" value="PEPTIDYL-PROLYL CIS-TRANS ISOMERASE"/>
    <property type="match status" value="1"/>
</dbReference>
<dbReference type="Pfam" id="PF00254">
    <property type="entry name" value="FKBP_C"/>
    <property type="match status" value="1"/>
</dbReference>
<dbReference type="SUPFAM" id="SSF54534">
    <property type="entry name" value="FKBP-like"/>
    <property type="match status" value="1"/>
</dbReference>
<dbReference type="PROSITE" id="PS50059">
    <property type="entry name" value="FKBP_PPIASE"/>
    <property type="match status" value="1"/>
</dbReference>
<reference key="1">
    <citation type="journal article" date="1999" name="Mol. Cell. Biol.">
        <title>Rapamycin antifungal action is mediated via conserved complexes with FKBP12 and TOR kinase homologs in Cryptococcus neoformans.</title>
        <authorList>
            <person name="Cruz M.C."/>
            <person name="Cavallo L.M."/>
            <person name="Goerlach J.M."/>
            <person name="Cox G."/>
            <person name="Perfect J.R."/>
            <person name="Cardenas M.E."/>
            <person name="Heitman J."/>
        </authorList>
    </citation>
    <scope>NUCLEOTIDE SEQUENCE [GENOMIC DNA / MRNA]</scope>
    <source>
        <strain>H99 / ATCC 208821 / CBS 10515 / FGSC 9487</strain>
    </source>
</reference>
<reference key="2">
    <citation type="journal article" date="2014" name="PLoS Genet.">
        <title>Analysis of the genome and transcriptome of Cryptococcus neoformans var. grubii reveals complex RNA expression and microevolution leading to virulence attenuation.</title>
        <authorList>
            <person name="Janbon G."/>
            <person name="Ormerod K.L."/>
            <person name="Paulet D."/>
            <person name="Byrnes E.J. III"/>
            <person name="Yadav V."/>
            <person name="Chatterjee G."/>
            <person name="Mullapudi N."/>
            <person name="Hon C.-C."/>
            <person name="Billmyre R.B."/>
            <person name="Brunel F."/>
            <person name="Bahn Y.-S."/>
            <person name="Chen W."/>
            <person name="Chen Y."/>
            <person name="Chow E.W.L."/>
            <person name="Coppee J.-Y."/>
            <person name="Floyd-Averette A."/>
            <person name="Gaillardin C."/>
            <person name="Gerik K.J."/>
            <person name="Goldberg J."/>
            <person name="Gonzalez-Hilarion S."/>
            <person name="Gujja S."/>
            <person name="Hamlin J.L."/>
            <person name="Hsueh Y.-P."/>
            <person name="Ianiri G."/>
            <person name="Jones S."/>
            <person name="Kodira C.D."/>
            <person name="Kozubowski L."/>
            <person name="Lam W."/>
            <person name="Marra M."/>
            <person name="Mesner L.D."/>
            <person name="Mieczkowski P.A."/>
            <person name="Moyrand F."/>
            <person name="Nielsen K."/>
            <person name="Proux C."/>
            <person name="Rossignol T."/>
            <person name="Schein J.E."/>
            <person name="Sun S."/>
            <person name="Wollschlaeger C."/>
            <person name="Wood I.A."/>
            <person name="Zeng Q."/>
            <person name="Neuveglise C."/>
            <person name="Newlon C.S."/>
            <person name="Perfect J.R."/>
            <person name="Lodge J.K."/>
            <person name="Idnurm A."/>
            <person name="Stajich J.E."/>
            <person name="Kronstad J.W."/>
            <person name="Sanyal K."/>
            <person name="Heitman J."/>
            <person name="Fraser J.A."/>
            <person name="Cuomo C.A."/>
            <person name="Dietrich F.S."/>
        </authorList>
    </citation>
    <scope>NUCLEOTIDE SEQUENCE [LARGE SCALE GENOMIC DNA]</scope>
    <source>
        <strain>H99 / ATCC 208821 / CBS 10515 / FGSC 9487</strain>
    </source>
</reference>
<name>FKBP_CRYNH</name>
<comment type="function">
    <text evidence="1">PPIases accelerate the folding of proteins. It catalyzes the cis-trans isomerization of proline imidic peptide bonds in oligopeptides (By similarity).</text>
</comment>
<comment type="catalytic activity">
    <reaction>
        <text>[protein]-peptidylproline (omega=180) = [protein]-peptidylproline (omega=0)</text>
        <dbReference type="Rhea" id="RHEA:16237"/>
        <dbReference type="Rhea" id="RHEA-COMP:10747"/>
        <dbReference type="Rhea" id="RHEA-COMP:10748"/>
        <dbReference type="ChEBI" id="CHEBI:83833"/>
        <dbReference type="ChEBI" id="CHEBI:83834"/>
        <dbReference type="EC" id="5.2.1.8"/>
    </reaction>
</comment>
<comment type="activity regulation">
    <text evidence="1">Inhibited by both FK506 and rapamycin.</text>
</comment>
<comment type="subcellular location">
    <subcellularLocation>
        <location evidence="1">Cytoplasm</location>
    </subcellularLocation>
</comment>
<comment type="similarity">
    <text evidence="3">Belongs to the FKBP-type PPIase family. FKBP1 subfamily.</text>
</comment>
<comment type="sequence caution" evidence="3">
    <conflict type="erroneous initiation">
        <sequence resource="EMBL-CDS" id="AFR93187"/>
    </conflict>
    <text>Extended N-terminus.</text>
</comment>
<protein>
    <recommendedName>
        <fullName>FK506-binding protein 1</fullName>
        <shortName>FKBP</shortName>
        <ecNumber>5.2.1.8</ecNumber>
    </recommendedName>
    <alternativeName>
        <fullName>Peptidyl-prolyl cis-trans isomerase</fullName>
        <shortName>PPIase</shortName>
    </alternativeName>
    <alternativeName>
        <fullName>Rapamycin-binding protein</fullName>
    </alternativeName>
</protein>
<sequence length="108" mass="11608">MGVTVENISAGDGKTFPQPGDNVTIHYVGTLLDGSKFDSSRDRGTPFVCRIGQGQVIRGWDEGVPQLSVGQKANLICTPDYAYGARGFPPVIPPNSTLKFEVELLKVN</sequence>
<evidence type="ECO:0000250" key="1"/>
<evidence type="ECO:0000255" key="2">
    <source>
        <dbReference type="PROSITE-ProRule" id="PRU00277"/>
    </source>
</evidence>
<evidence type="ECO:0000305" key="3"/>
<evidence type="ECO:0007829" key="4">
    <source>
        <dbReference type="PDB" id="6TZ8"/>
    </source>
</evidence>
<keyword id="KW-0002">3D-structure</keyword>
<keyword id="KW-0963">Cytoplasm</keyword>
<keyword id="KW-0413">Isomerase</keyword>
<keyword id="KW-0697">Rotamase</keyword>
<feature type="chain" id="PRO_0000233323" description="FK506-binding protein 1">
    <location>
        <begin position="1"/>
        <end position="108"/>
    </location>
</feature>
<feature type="domain" description="PPIase FKBP-type" evidence="2">
    <location>
        <begin position="20"/>
        <end position="108"/>
    </location>
</feature>
<feature type="strand" evidence="4">
    <location>
        <begin position="3"/>
        <end position="9"/>
    </location>
</feature>
<feature type="strand" evidence="4">
    <location>
        <begin position="22"/>
        <end position="26"/>
    </location>
</feature>
<feature type="strand" evidence="4">
    <location>
        <begin position="28"/>
        <end position="30"/>
    </location>
</feature>
<feature type="strand" evidence="4">
    <location>
        <begin position="36"/>
        <end position="39"/>
    </location>
</feature>
<feature type="helix" evidence="4">
    <location>
        <begin position="40"/>
        <end position="42"/>
    </location>
</feature>
<feature type="strand" evidence="4">
    <location>
        <begin position="47"/>
        <end position="50"/>
    </location>
</feature>
<feature type="turn" evidence="4">
    <location>
        <begin position="51"/>
        <end position="54"/>
    </location>
</feature>
<feature type="helix" evidence="4">
    <location>
        <begin position="58"/>
        <end position="63"/>
    </location>
</feature>
<feature type="helix" evidence="4">
    <location>
        <begin position="64"/>
        <end position="66"/>
    </location>
</feature>
<feature type="strand" evidence="4">
    <location>
        <begin position="72"/>
        <end position="77"/>
    </location>
</feature>
<feature type="helix" evidence="4">
    <location>
        <begin position="79"/>
        <end position="81"/>
    </location>
</feature>
<feature type="turn" evidence="4">
    <location>
        <begin position="82"/>
        <end position="86"/>
    </location>
</feature>
<feature type="strand" evidence="4">
    <location>
        <begin position="89"/>
        <end position="92"/>
    </location>
</feature>
<feature type="strand" evidence="4">
    <location>
        <begin position="98"/>
        <end position="107"/>
    </location>
</feature>